<accession>B4SPH3</accession>
<feature type="chain" id="PRO_1000130212" description="tRNA (guanine-N(1)-)-methyltransferase">
    <location>
        <begin position="1"/>
        <end position="252"/>
    </location>
</feature>
<feature type="binding site" evidence="1">
    <location>
        <position position="113"/>
    </location>
    <ligand>
        <name>S-adenosyl-L-methionine</name>
        <dbReference type="ChEBI" id="CHEBI:59789"/>
    </ligand>
</feature>
<feature type="binding site" evidence="1">
    <location>
        <begin position="133"/>
        <end position="138"/>
    </location>
    <ligand>
        <name>S-adenosyl-L-methionine</name>
        <dbReference type="ChEBI" id="CHEBI:59789"/>
    </ligand>
</feature>
<name>TRMD_STRM5</name>
<organism>
    <name type="scientific">Stenotrophomonas maltophilia (strain R551-3)</name>
    <dbReference type="NCBI Taxonomy" id="391008"/>
    <lineage>
        <taxon>Bacteria</taxon>
        <taxon>Pseudomonadati</taxon>
        <taxon>Pseudomonadota</taxon>
        <taxon>Gammaproteobacteria</taxon>
        <taxon>Lysobacterales</taxon>
        <taxon>Lysobacteraceae</taxon>
        <taxon>Stenotrophomonas</taxon>
        <taxon>Stenotrophomonas maltophilia group</taxon>
    </lineage>
</organism>
<proteinExistence type="inferred from homology"/>
<dbReference type="EC" id="2.1.1.228" evidence="1"/>
<dbReference type="EMBL" id="CP001111">
    <property type="protein sequence ID" value="ACF50860.1"/>
    <property type="molecule type" value="Genomic_DNA"/>
</dbReference>
<dbReference type="RefSeq" id="WP_012510437.1">
    <property type="nucleotide sequence ID" value="NC_011071.1"/>
</dbReference>
<dbReference type="SMR" id="B4SPH3"/>
<dbReference type="STRING" id="391008.Smal_1155"/>
<dbReference type="KEGG" id="smt:Smal_1155"/>
<dbReference type="eggNOG" id="COG0336">
    <property type="taxonomic scope" value="Bacteria"/>
</dbReference>
<dbReference type="HOGENOM" id="CLU_047363_0_1_6"/>
<dbReference type="OrthoDB" id="9807416at2"/>
<dbReference type="Proteomes" id="UP000001867">
    <property type="component" value="Chromosome"/>
</dbReference>
<dbReference type="GO" id="GO:0005829">
    <property type="term" value="C:cytosol"/>
    <property type="evidence" value="ECO:0007669"/>
    <property type="project" value="TreeGrafter"/>
</dbReference>
<dbReference type="GO" id="GO:0052906">
    <property type="term" value="F:tRNA (guanine(37)-N1)-methyltransferase activity"/>
    <property type="evidence" value="ECO:0007669"/>
    <property type="project" value="UniProtKB-UniRule"/>
</dbReference>
<dbReference type="GO" id="GO:0002939">
    <property type="term" value="P:tRNA N1-guanine methylation"/>
    <property type="evidence" value="ECO:0007669"/>
    <property type="project" value="TreeGrafter"/>
</dbReference>
<dbReference type="CDD" id="cd18080">
    <property type="entry name" value="TrmD-like"/>
    <property type="match status" value="1"/>
</dbReference>
<dbReference type="FunFam" id="1.10.1270.20:FF:000001">
    <property type="entry name" value="tRNA (guanine-N(1)-)-methyltransferase"/>
    <property type="match status" value="1"/>
</dbReference>
<dbReference type="FunFam" id="3.40.1280.10:FF:000001">
    <property type="entry name" value="tRNA (guanine-N(1)-)-methyltransferase"/>
    <property type="match status" value="1"/>
</dbReference>
<dbReference type="Gene3D" id="3.40.1280.10">
    <property type="match status" value="1"/>
</dbReference>
<dbReference type="Gene3D" id="1.10.1270.20">
    <property type="entry name" value="tRNA(m1g37)methyltransferase, domain 2"/>
    <property type="match status" value="1"/>
</dbReference>
<dbReference type="HAMAP" id="MF_00605">
    <property type="entry name" value="TrmD"/>
    <property type="match status" value="1"/>
</dbReference>
<dbReference type="InterPro" id="IPR029028">
    <property type="entry name" value="Alpha/beta_knot_MTases"/>
</dbReference>
<dbReference type="InterPro" id="IPR023148">
    <property type="entry name" value="tRNA_m1G_MeTrfase_C_sf"/>
</dbReference>
<dbReference type="InterPro" id="IPR002649">
    <property type="entry name" value="tRNA_m1G_MeTrfase_TrmD"/>
</dbReference>
<dbReference type="InterPro" id="IPR029026">
    <property type="entry name" value="tRNA_m1G_MTases_N"/>
</dbReference>
<dbReference type="InterPro" id="IPR016009">
    <property type="entry name" value="tRNA_MeTrfase_TRMD/TRM10"/>
</dbReference>
<dbReference type="NCBIfam" id="NF000648">
    <property type="entry name" value="PRK00026.1"/>
    <property type="match status" value="1"/>
</dbReference>
<dbReference type="NCBIfam" id="TIGR00088">
    <property type="entry name" value="trmD"/>
    <property type="match status" value="1"/>
</dbReference>
<dbReference type="PANTHER" id="PTHR46417">
    <property type="entry name" value="TRNA (GUANINE-N(1)-)-METHYLTRANSFERASE"/>
    <property type="match status" value="1"/>
</dbReference>
<dbReference type="PANTHER" id="PTHR46417:SF1">
    <property type="entry name" value="TRNA (GUANINE-N(1)-)-METHYLTRANSFERASE"/>
    <property type="match status" value="1"/>
</dbReference>
<dbReference type="Pfam" id="PF01746">
    <property type="entry name" value="tRNA_m1G_MT"/>
    <property type="match status" value="1"/>
</dbReference>
<dbReference type="PIRSF" id="PIRSF000386">
    <property type="entry name" value="tRNA_mtase"/>
    <property type="match status" value="1"/>
</dbReference>
<dbReference type="SUPFAM" id="SSF75217">
    <property type="entry name" value="alpha/beta knot"/>
    <property type="match status" value="1"/>
</dbReference>
<keyword id="KW-0963">Cytoplasm</keyword>
<keyword id="KW-0489">Methyltransferase</keyword>
<keyword id="KW-0949">S-adenosyl-L-methionine</keyword>
<keyword id="KW-0808">Transferase</keyword>
<keyword id="KW-0819">tRNA processing</keyword>
<sequence>MRFDVITLFPEFLAQSAGLGVVGRAREKGLFSLHGWNPRDYAEGNYRRVDDRPFGGGPGMVMLIEPLQACLQAIRDADPTPARVIHLSPQGAPLTQAKVRELAALPRMVLLCGRYEGIDERFLEANVDEEISLGDYVLSGGELGAAVIIDAVARLQDGALNDAESAAQDSFEGDLGLLDCPHYSQPAQHPLGDVPEVLRSGNHAAIAAWRRQQSLVRTAQRRPDLLDEQALGKADRKLLDQARQAQKQKASP</sequence>
<evidence type="ECO:0000255" key="1">
    <source>
        <dbReference type="HAMAP-Rule" id="MF_00605"/>
    </source>
</evidence>
<reference key="1">
    <citation type="submission" date="2008-06" db="EMBL/GenBank/DDBJ databases">
        <title>Complete sequence of Stenotrophomonas maltophilia R551-3.</title>
        <authorList>
            <consortium name="US DOE Joint Genome Institute"/>
            <person name="Lucas S."/>
            <person name="Copeland A."/>
            <person name="Lapidus A."/>
            <person name="Glavina del Rio T."/>
            <person name="Dalin E."/>
            <person name="Tice H."/>
            <person name="Pitluck S."/>
            <person name="Chain P."/>
            <person name="Malfatti S."/>
            <person name="Shin M."/>
            <person name="Vergez L."/>
            <person name="Lang D."/>
            <person name="Schmutz J."/>
            <person name="Larimer F."/>
            <person name="Land M."/>
            <person name="Hauser L."/>
            <person name="Kyrpides N."/>
            <person name="Mikhailova N."/>
            <person name="Taghavi S."/>
            <person name="Monchy S."/>
            <person name="Newman L."/>
            <person name="Vangronsveld J."/>
            <person name="van der Lelie D."/>
            <person name="Richardson P."/>
        </authorList>
    </citation>
    <scope>NUCLEOTIDE SEQUENCE [LARGE SCALE GENOMIC DNA]</scope>
    <source>
        <strain>R551-3</strain>
    </source>
</reference>
<gene>
    <name evidence="1" type="primary">trmD</name>
    <name type="ordered locus">Smal_1155</name>
</gene>
<comment type="function">
    <text evidence="1">Specifically methylates guanosine-37 in various tRNAs.</text>
</comment>
<comment type="catalytic activity">
    <reaction evidence="1">
        <text>guanosine(37) in tRNA + S-adenosyl-L-methionine = N(1)-methylguanosine(37) in tRNA + S-adenosyl-L-homocysteine + H(+)</text>
        <dbReference type="Rhea" id="RHEA:36899"/>
        <dbReference type="Rhea" id="RHEA-COMP:10145"/>
        <dbReference type="Rhea" id="RHEA-COMP:10147"/>
        <dbReference type="ChEBI" id="CHEBI:15378"/>
        <dbReference type="ChEBI" id="CHEBI:57856"/>
        <dbReference type="ChEBI" id="CHEBI:59789"/>
        <dbReference type="ChEBI" id="CHEBI:73542"/>
        <dbReference type="ChEBI" id="CHEBI:74269"/>
        <dbReference type="EC" id="2.1.1.228"/>
    </reaction>
</comment>
<comment type="subunit">
    <text evidence="1">Homodimer.</text>
</comment>
<comment type="subcellular location">
    <subcellularLocation>
        <location evidence="1">Cytoplasm</location>
    </subcellularLocation>
</comment>
<comment type="similarity">
    <text evidence="1">Belongs to the RNA methyltransferase TrmD family.</text>
</comment>
<protein>
    <recommendedName>
        <fullName evidence="1">tRNA (guanine-N(1)-)-methyltransferase</fullName>
        <ecNumber evidence="1">2.1.1.228</ecNumber>
    </recommendedName>
    <alternativeName>
        <fullName evidence="1">M1G-methyltransferase</fullName>
    </alternativeName>
    <alternativeName>
        <fullName evidence="1">tRNA [GM37] methyltransferase</fullName>
    </alternativeName>
</protein>